<keyword id="KW-0067">ATP-binding</keyword>
<keyword id="KW-0315">Glutamine amidotransferase</keyword>
<keyword id="KW-0332">GMP biosynthesis</keyword>
<keyword id="KW-0436">Ligase</keyword>
<keyword id="KW-0547">Nucleotide-binding</keyword>
<keyword id="KW-0658">Purine biosynthesis</keyword>
<name>GUAA_THEFY</name>
<evidence type="ECO:0000255" key="1">
    <source>
        <dbReference type="HAMAP-Rule" id="MF_00344"/>
    </source>
</evidence>
<feature type="chain" id="PRO_0000229480" description="GMP synthase [glutamine-hydrolyzing]">
    <location>
        <begin position="1"/>
        <end position="528"/>
    </location>
</feature>
<feature type="domain" description="Glutamine amidotransferase type-1" evidence="1">
    <location>
        <begin position="13"/>
        <end position="203"/>
    </location>
</feature>
<feature type="domain" description="GMPS ATP-PPase" evidence="1">
    <location>
        <begin position="204"/>
        <end position="402"/>
    </location>
</feature>
<feature type="active site" description="Nucleophile" evidence="1">
    <location>
        <position position="90"/>
    </location>
</feature>
<feature type="active site" evidence="1">
    <location>
        <position position="177"/>
    </location>
</feature>
<feature type="active site" evidence="1">
    <location>
        <position position="179"/>
    </location>
</feature>
<feature type="binding site" evidence="1">
    <location>
        <begin position="231"/>
        <end position="237"/>
    </location>
    <ligand>
        <name>ATP</name>
        <dbReference type="ChEBI" id="CHEBI:30616"/>
    </ligand>
</feature>
<sequence>MSVAGAPESTFDTVLVVDFGAQYAQLIARRVRECHVYSEIVPPTMPVEEMLAKKPKAIILSGGPSSVYADGAPQAPPGLFDTGVPILGICYGFQVMAQTLGGTVERTGRSEYGRTTINVATDSLLFHSLPQQQTVWMSHGDAVSQVPDGFTVTGQTADAPVAAMEHRDRALYGVQFHPEVVHTEHGRAVLQHFLYEAAGCRPTWTMVNIVEDQVARIRAQIGSKRAICGLSGGVDSAVAAALVQRAIGDRLTCVFVDHGLLRQGEAEQVEKDFVAATGASLKVVDAQERFLTALAGVTDPETKRKIIGREFIRVFEQAAREIVAEAGEGDEAVEFLVQGTLYPDVVESGGGNGTANIKSHHNVGGLPDDLQFTLVEPLRELFKDEVRRVGEELGLPAEMVWRHPFPGPGLAIRIVGEVTAERLEILRAADAIVREELTRAGLDRAIWQCPVVLLADVRSVGVQGDGRTYGHPIVLRPVTSEDAMTADWARVPYDVLATISNRITNEVPDINRVTLDITSKPPGTIEWE</sequence>
<gene>
    <name evidence="1" type="primary">guaA</name>
    <name type="ordered locus">Tfu_2589</name>
</gene>
<accession>Q47LQ0</accession>
<protein>
    <recommendedName>
        <fullName evidence="1">GMP synthase [glutamine-hydrolyzing]</fullName>
        <ecNumber evidence="1">6.3.5.2</ecNumber>
    </recommendedName>
    <alternativeName>
        <fullName evidence="1">GMP synthetase</fullName>
    </alternativeName>
    <alternativeName>
        <fullName evidence="1">Glutamine amidotransferase</fullName>
    </alternativeName>
</protein>
<comment type="function">
    <text evidence="1">Catalyzes the synthesis of GMP from XMP.</text>
</comment>
<comment type="catalytic activity">
    <reaction evidence="1">
        <text>XMP + L-glutamine + ATP + H2O = GMP + L-glutamate + AMP + diphosphate + 2 H(+)</text>
        <dbReference type="Rhea" id="RHEA:11680"/>
        <dbReference type="ChEBI" id="CHEBI:15377"/>
        <dbReference type="ChEBI" id="CHEBI:15378"/>
        <dbReference type="ChEBI" id="CHEBI:29985"/>
        <dbReference type="ChEBI" id="CHEBI:30616"/>
        <dbReference type="ChEBI" id="CHEBI:33019"/>
        <dbReference type="ChEBI" id="CHEBI:57464"/>
        <dbReference type="ChEBI" id="CHEBI:58115"/>
        <dbReference type="ChEBI" id="CHEBI:58359"/>
        <dbReference type="ChEBI" id="CHEBI:456215"/>
        <dbReference type="EC" id="6.3.5.2"/>
    </reaction>
</comment>
<comment type="pathway">
    <text evidence="1">Purine metabolism; GMP biosynthesis; GMP from XMP (L-Gln route): step 1/1.</text>
</comment>
<comment type="subunit">
    <text evidence="1">Homodimer.</text>
</comment>
<reference key="1">
    <citation type="journal article" date="2007" name="J. Bacteriol.">
        <title>Genome sequence and analysis of the soil cellulolytic actinomycete Thermobifida fusca YX.</title>
        <authorList>
            <person name="Lykidis A."/>
            <person name="Mavromatis K."/>
            <person name="Ivanova N."/>
            <person name="Anderson I."/>
            <person name="Land M."/>
            <person name="DiBartolo G."/>
            <person name="Martinez M."/>
            <person name="Lapidus A."/>
            <person name="Lucas S."/>
            <person name="Copeland A."/>
            <person name="Richardson P."/>
            <person name="Wilson D.B."/>
            <person name="Kyrpides N."/>
        </authorList>
    </citation>
    <scope>NUCLEOTIDE SEQUENCE [LARGE SCALE GENOMIC DNA]</scope>
    <source>
        <strain>YX</strain>
    </source>
</reference>
<proteinExistence type="inferred from homology"/>
<organism>
    <name type="scientific">Thermobifida fusca (strain YX)</name>
    <dbReference type="NCBI Taxonomy" id="269800"/>
    <lineage>
        <taxon>Bacteria</taxon>
        <taxon>Bacillati</taxon>
        <taxon>Actinomycetota</taxon>
        <taxon>Actinomycetes</taxon>
        <taxon>Streptosporangiales</taxon>
        <taxon>Nocardiopsidaceae</taxon>
        <taxon>Thermobifida</taxon>
    </lineage>
</organism>
<dbReference type="EC" id="6.3.5.2" evidence="1"/>
<dbReference type="EMBL" id="CP000088">
    <property type="protein sequence ID" value="AAZ56622.1"/>
    <property type="molecule type" value="Genomic_DNA"/>
</dbReference>
<dbReference type="RefSeq" id="WP_011293012.1">
    <property type="nucleotide sequence ID" value="NC_007333.1"/>
</dbReference>
<dbReference type="SMR" id="Q47LQ0"/>
<dbReference type="STRING" id="269800.Tfu_2589"/>
<dbReference type="KEGG" id="tfu:Tfu_2589"/>
<dbReference type="eggNOG" id="COG0518">
    <property type="taxonomic scope" value="Bacteria"/>
</dbReference>
<dbReference type="eggNOG" id="COG0519">
    <property type="taxonomic scope" value="Bacteria"/>
</dbReference>
<dbReference type="HOGENOM" id="CLU_014340_0_5_11"/>
<dbReference type="OrthoDB" id="9802219at2"/>
<dbReference type="UniPathway" id="UPA00189">
    <property type="reaction ID" value="UER00296"/>
</dbReference>
<dbReference type="GO" id="GO:0005829">
    <property type="term" value="C:cytosol"/>
    <property type="evidence" value="ECO:0007669"/>
    <property type="project" value="TreeGrafter"/>
</dbReference>
<dbReference type="GO" id="GO:0005524">
    <property type="term" value="F:ATP binding"/>
    <property type="evidence" value="ECO:0007669"/>
    <property type="project" value="UniProtKB-UniRule"/>
</dbReference>
<dbReference type="GO" id="GO:0003921">
    <property type="term" value="F:GMP synthase activity"/>
    <property type="evidence" value="ECO:0007669"/>
    <property type="project" value="InterPro"/>
</dbReference>
<dbReference type="CDD" id="cd01742">
    <property type="entry name" value="GATase1_GMP_Synthase"/>
    <property type="match status" value="1"/>
</dbReference>
<dbReference type="CDD" id="cd01997">
    <property type="entry name" value="GMP_synthase_C"/>
    <property type="match status" value="1"/>
</dbReference>
<dbReference type="FunFam" id="3.30.300.10:FF:000002">
    <property type="entry name" value="GMP synthase [glutamine-hydrolyzing]"/>
    <property type="match status" value="1"/>
</dbReference>
<dbReference type="FunFam" id="3.40.50.620:FF:000001">
    <property type="entry name" value="GMP synthase [glutamine-hydrolyzing]"/>
    <property type="match status" value="1"/>
</dbReference>
<dbReference type="FunFam" id="3.40.50.880:FF:000001">
    <property type="entry name" value="GMP synthase [glutamine-hydrolyzing]"/>
    <property type="match status" value="1"/>
</dbReference>
<dbReference type="Gene3D" id="3.30.300.10">
    <property type="match status" value="1"/>
</dbReference>
<dbReference type="Gene3D" id="3.40.50.880">
    <property type="match status" value="1"/>
</dbReference>
<dbReference type="Gene3D" id="3.40.50.620">
    <property type="entry name" value="HUPs"/>
    <property type="match status" value="1"/>
</dbReference>
<dbReference type="HAMAP" id="MF_00344">
    <property type="entry name" value="GMP_synthase"/>
    <property type="match status" value="1"/>
</dbReference>
<dbReference type="InterPro" id="IPR029062">
    <property type="entry name" value="Class_I_gatase-like"/>
</dbReference>
<dbReference type="InterPro" id="IPR017926">
    <property type="entry name" value="GATASE"/>
</dbReference>
<dbReference type="InterPro" id="IPR001674">
    <property type="entry name" value="GMP_synth_C"/>
</dbReference>
<dbReference type="InterPro" id="IPR004739">
    <property type="entry name" value="GMP_synth_GATase"/>
</dbReference>
<dbReference type="InterPro" id="IPR022955">
    <property type="entry name" value="GMP_synthase"/>
</dbReference>
<dbReference type="InterPro" id="IPR025777">
    <property type="entry name" value="GMPS_ATP_PPase_dom"/>
</dbReference>
<dbReference type="InterPro" id="IPR022310">
    <property type="entry name" value="NAD/GMP_synthase"/>
</dbReference>
<dbReference type="InterPro" id="IPR014729">
    <property type="entry name" value="Rossmann-like_a/b/a_fold"/>
</dbReference>
<dbReference type="NCBIfam" id="TIGR00884">
    <property type="entry name" value="guaA_Cterm"/>
    <property type="match status" value="1"/>
</dbReference>
<dbReference type="NCBIfam" id="TIGR00888">
    <property type="entry name" value="guaA_Nterm"/>
    <property type="match status" value="1"/>
</dbReference>
<dbReference type="NCBIfam" id="NF000848">
    <property type="entry name" value="PRK00074.1"/>
    <property type="match status" value="1"/>
</dbReference>
<dbReference type="PANTHER" id="PTHR11922:SF2">
    <property type="entry name" value="GMP SYNTHASE [GLUTAMINE-HYDROLYZING]"/>
    <property type="match status" value="1"/>
</dbReference>
<dbReference type="PANTHER" id="PTHR11922">
    <property type="entry name" value="GMP SYNTHASE-RELATED"/>
    <property type="match status" value="1"/>
</dbReference>
<dbReference type="Pfam" id="PF00117">
    <property type="entry name" value="GATase"/>
    <property type="match status" value="1"/>
</dbReference>
<dbReference type="Pfam" id="PF00958">
    <property type="entry name" value="GMP_synt_C"/>
    <property type="match status" value="1"/>
</dbReference>
<dbReference type="Pfam" id="PF02540">
    <property type="entry name" value="NAD_synthase"/>
    <property type="match status" value="1"/>
</dbReference>
<dbReference type="PRINTS" id="PR00097">
    <property type="entry name" value="ANTSNTHASEII"/>
</dbReference>
<dbReference type="PRINTS" id="PR00099">
    <property type="entry name" value="CPSGATASE"/>
</dbReference>
<dbReference type="PRINTS" id="PR00096">
    <property type="entry name" value="GATASE"/>
</dbReference>
<dbReference type="SUPFAM" id="SSF52402">
    <property type="entry name" value="Adenine nucleotide alpha hydrolases-like"/>
    <property type="match status" value="1"/>
</dbReference>
<dbReference type="SUPFAM" id="SSF52317">
    <property type="entry name" value="Class I glutamine amidotransferase-like"/>
    <property type="match status" value="1"/>
</dbReference>
<dbReference type="SUPFAM" id="SSF54810">
    <property type="entry name" value="GMP synthetase C-terminal dimerisation domain"/>
    <property type="match status" value="1"/>
</dbReference>
<dbReference type="PROSITE" id="PS51273">
    <property type="entry name" value="GATASE_TYPE_1"/>
    <property type="match status" value="1"/>
</dbReference>
<dbReference type="PROSITE" id="PS51553">
    <property type="entry name" value="GMPS_ATP_PPASE"/>
    <property type="match status" value="1"/>
</dbReference>